<name>RS3_THEAC</name>
<feature type="chain" id="PRO_0000130264" description="Small ribosomal subunit protein uS3">
    <location>
        <begin position="1"/>
        <end position="225"/>
    </location>
</feature>
<feature type="domain" description="KH type-2" evidence="1">
    <location>
        <begin position="16"/>
        <end position="85"/>
    </location>
</feature>
<feature type="region of interest" description="Disordered" evidence="2">
    <location>
        <begin position="202"/>
        <end position="225"/>
    </location>
</feature>
<feature type="compositionally biased region" description="Basic and acidic residues" evidence="2">
    <location>
        <begin position="205"/>
        <end position="225"/>
    </location>
</feature>
<accession>Q9HIR5</accession>
<dbReference type="EMBL" id="AL445067">
    <property type="protein sequence ID" value="CAC12389.1"/>
    <property type="molecule type" value="Genomic_DNA"/>
</dbReference>
<dbReference type="RefSeq" id="WP_010901673.1">
    <property type="nucleotide sequence ID" value="NC_002578.1"/>
</dbReference>
<dbReference type="SMR" id="Q9HIR5"/>
<dbReference type="FunCoup" id="Q9HIR5">
    <property type="interactions" value="180"/>
</dbReference>
<dbReference type="STRING" id="273075.gene:9572488"/>
<dbReference type="PaxDb" id="273075-Ta1265"/>
<dbReference type="EnsemblBacteria" id="CAC12389">
    <property type="protein sequence ID" value="CAC12389"/>
    <property type="gene ID" value="CAC12389"/>
</dbReference>
<dbReference type="KEGG" id="tac:Ta1265"/>
<dbReference type="eggNOG" id="arCOG04097">
    <property type="taxonomic scope" value="Archaea"/>
</dbReference>
<dbReference type="HOGENOM" id="CLU_058591_1_1_2"/>
<dbReference type="InParanoid" id="Q9HIR5"/>
<dbReference type="OrthoDB" id="9126at2157"/>
<dbReference type="Proteomes" id="UP000001024">
    <property type="component" value="Chromosome"/>
</dbReference>
<dbReference type="GO" id="GO:0022627">
    <property type="term" value="C:cytosolic small ribosomal subunit"/>
    <property type="evidence" value="ECO:0007669"/>
    <property type="project" value="TreeGrafter"/>
</dbReference>
<dbReference type="GO" id="GO:0019843">
    <property type="term" value="F:rRNA binding"/>
    <property type="evidence" value="ECO:0007669"/>
    <property type="project" value="UniProtKB-UniRule"/>
</dbReference>
<dbReference type="GO" id="GO:0003735">
    <property type="term" value="F:structural constituent of ribosome"/>
    <property type="evidence" value="ECO:0007669"/>
    <property type="project" value="InterPro"/>
</dbReference>
<dbReference type="GO" id="GO:0006412">
    <property type="term" value="P:translation"/>
    <property type="evidence" value="ECO:0007669"/>
    <property type="project" value="UniProtKB-UniRule"/>
</dbReference>
<dbReference type="CDD" id="cd02411">
    <property type="entry name" value="KH-II_30S_S3_arch"/>
    <property type="match status" value="1"/>
</dbReference>
<dbReference type="FunFam" id="3.30.300.20:FF:000001">
    <property type="entry name" value="30S ribosomal protein S3"/>
    <property type="match status" value="1"/>
</dbReference>
<dbReference type="Gene3D" id="3.30.300.20">
    <property type="match status" value="1"/>
</dbReference>
<dbReference type="Gene3D" id="3.30.1140.32">
    <property type="entry name" value="Ribosomal protein S3, C-terminal domain"/>
    <property type="match status" value="1"/>
</dbReference>
<dbReference type="HAMAP" id="MF_01309_A">
    <property type="entry name" value="Ribosomal_uS3_A"/>
    <property type="match status" value="1"/>
</dbReference>
<dbReference type="InterPro" id="IPR004087">
    <property type="entry name" value="KH_dom"/>
</dbReference>
<dbReference type="InterPro" id="IPR015946">
    <property type="entry name" value="KH_dom-like_a/b"/>
</dbReference>
<dbReference type="InterPro" id="IPR004044">
    <property type="entry name" value="KH_dom_type_2"/>
</dbReference>
<dbReference type="InterPro" id="IPR009019">
    <property type="entry name" value="KH_sf_prok-type"/>
</dbReference>
<dbReference type="InterPro" id="IPR036419">
    <property type="entry name" value="Ribosomal_S3_C_sf"/>
</dbReference>
<dbReference type="InterPro" id="IPR027488">
    <property type="entry name" value="Ribosomal_uS3_arc"/>
</dbReference>
<dbReference type="InterPro" id="IPR001351">
    <property type="entry name" value="Ribosomal_uS3_C"/>
</dbReference>
<dbReference type="InterPro" id="IPR005703">
    <property type="entry name" value="Ribosomal_uS3_euk/arc"/>
</dbReference>
<dbReference type="NCBIfam" id="NF003219">
    <property type="entry name" value="PRK04191.1"/>
    <property type="match status" value="1"/>
</dbReference>
<dbReference type="NCBIfam" id="TIGR01008">
    <property type="entry name" value="uS3_euk_arch"/>
    <property type="match status" value="1"/>
</dbReference>
<dbReference type="PANTHER" id="PTHR11760">
    <property type="entry name" value="30S/40S RIBOSOMAL PROTEIN S3"/>
    <property type="match status" value="1"/>
</dbReference>
<dbReference type="PANTHER" id="PTHR11760:SF32">
    <property type="entry name" value="SMALL RIBOSOMAL SUBUNIT PROTEIN US3"/>
    <property type="match status" value="1"/>
</dbReference>
<dbReference type="Pfam" id="PF07650">
    <property type="entry name" value="KH_2"/>
    <property type="match status" value="1"/>
</dbReference>
<dbReference type="Pfam" id="PF00189">
    <property type="entry name" value="Ribosomal_S3_C"/>
    <property type="match status" value="1"/>
</dbReference>
<dbReference type="SMART" id="SM00322">
    <property type="entry name" value="KH"/>
    <property type="match status" value="1"/>
</dbReference>
<dbReference type="SUPFAM" id="SSF54814">
    <property type="entry name" value="Prokaryotic type KH domain (KH-domain type II)"/>
    <property type="match status" value="1"/>
</dbReference>
<dbReference type="SUPFAM" id="SSF54821">
    <property type="entry name" value="Ribosomal protein S3 C-terminal domain"/>
    <property type="match status" value="1"/>
</dbReference>
<dbReference type="PROSITE" id="PS50823">
    <property type="entry name" value="KH_TYPE_2"/>
    <property type="match status" value="1"/>
</dbReference>
<comment type="function">
    <text evidence="1">Binds the lower part of the 30S subunit head.</text>
</comment>
<comment type="subunit">
    <text evidence="1">Part of the 30S ribosomal subunit.</text>
</comment>
<comment type="similarity">
    <text evidence="1">Belongs to the universal ribosomal protein uS3 family.</text>
</comment>
<organism>
    <name type="scientific">Thermoplasma acidophilum (strain ATCC 25905 / DSM 1728 / JCM 9062 / NBRC 15155 / AMRC-C165)</name>
    <dbReference type="NCBI Taxonomy" id="273075"/>
    <lineage>
        <taxon>Archaea</taxon>
        <taxon>Methanobacteriati</taxon>
        <taxon>Thermoplasmatota</taxon>
        <taxon>Thermoplasmata</taxon>
        <taxon>Thermoplasmatales</taxon>
        <taxon>Thermoplasmataceae</taxon>
        <taxon>Thermoplasma</taxon>
    </lineage>
</organism>
<proteinExistence type="inferred from homology"/>
<sequence>MKERKFINEAVKRLLVCEYVVKETENAGFGNMVMKRTPFGTNITLYVNRPGLVIGRRGSKVQQMTDTLEKKYGIETPQIEVKDVKDPDLNPSVIAKKIALSLEKGWSYRKAGNTSLNRTIQAGAKGVLIKISGKISGERARYQKFIYGNVKYSGEPGSKGMITGFSTAKLKVGILGVTVKILNPEYKLPDVFSIENITGGEEVGTESKADQTDVEGRETGNAEES</sequence>
<keyword id="KW-1185">Reference proteome</keyword>
<keyword id="KW-0687">Ribonucleoprotein</keyword>
<keyword id="KW-0689">Ribosomal protein</keyword>
<keyword id="KW-0694">RNA-binding</keyword>
<keyword id="KW-0699">rRNA-binding</keyword>
<reference key="1">
    <citation type="journal article" date="2000" name="Nature">
        <title>The genome sequence of the thermoacidophilic scavenger Thermoplasma acidophilum.</title>
        <authorList>
            <person name="Ruepp A."/>
            <person name="Graml W."/>
            <person name="Santos-Martinez M.-L."/>
            <person name="Koretke K.K."/>
            <person name="Volker C."/>
            <person name="Mewes H.-W."/>
            <person name="Frishman D."/>
            <person name="Stocker S."/>
            <person name="Lupas A.N."/>
            <person name="Baumeister W."/>
        </authorList>
    </citation>
    <scope>NUCLEOTIDE SEQUENCE [LARGE SCALE GENOMIC DNA]</scope>
    <source>
        <strain>ATCC 25905 / DSM 1728 / JCM 9062 / NBRC 15155 / AMRC-C165</strain>
    </source>
</reference>
<gene>
    <name evidence="1" type="primary">rps3</name>
    <name type="ordered locus">Ta1265</name>
</gene>
<protein>
    <recommendedName>
        <fullName evidence="1">Small ribosomal subunit protein uS3</fullName>
    </recommendedName>
    <alternativeName>
        <fullName evidence="3">30S ribosomal protein S3</fullName>
    </alternativeName>
</protein>
<evidence type="ECO:0000255" key="1">
    <source>
        <dbReference type="HAMAP-Rule" id="MF_01309"/>
    </source>
</evidence>
<evidence type="ECO:0000256" key="2">
    <source>
        <dbReference type="SAM" id="MobiDB-lite"/>
    </source>
</evidence>
<evidence type="ECO:0000305" key="3"/>